<name>PPR21_MOUSE</name>
<feature type="chain" id="PRO_0000286099" description="Protein phosphatase 1 regulatory subunit 21">
    <location>
        <begin position="1"/>
        <end position="780"/>
    </location>
</feature>
<feature type="region of interest" description="Disordered" evidence="3">
    <location>
        <begin position="84"/>
        <end position="104"/>
    </location>
</feature>
<feature type="coiled-coil region" evidence="2">
    <location>
        <begin position="1"/>
        <end position="209"/>
    </location>
</feature>
<feature type="coiled-coil region" evidence="2">
    <location>
        <begin position="556"/>
        <end position="605"/>
    </location>
</feature>
<feature type="coiled-coil region" evidence="2">
    <location>
        <begin position="694"/>
        <end position="742"/>
    </location>
</feature>
<feature type="compositionally biased region" description="Low complexity" evidence="3">
    <location>
        <begin position="95"/>
        <end position="104"/>
    </location>
</feature>
<feature type="modified residue" description="Phosphothreonine" evidence="7">
    <location>
        <position position="652"/>
    </location>
</feature>
<feature type="splice variant" id="VSP_024988" description="In isoform 2." evidence="5">
    <location>
        <begin position="1"/>
        <end position="516"/>
    </location>
</feature>
<feature type="splice variant" id="VSP_024990" description="In isoform 2." evidence="5">
    <location>
        <begin position="520"/>
        <end position="645"/>
    </location>
</feature>
<feature type="sequence conflict" description="In Ref. 1; BAE33041." evidence="6" ref="1">
    <original>Q</original>
    <variation>E</variation>
    <location>
        <position position="11"/>
    </location>
</feature>
<feature type="sequence conflict" description="In Ref. 1; BAC25797." evidence="6" ref="1">
    <original>N</original>
    <variation>S</variation>
    <location>
        <position position="119"/>
    </location>
</feature>
<feature type="sequence conflict" description="In Ref. 1; BAE33041/BAE41663." evidence="6" ref="1">
    <original>M</original>
    <variation>T</variation>
    <location>
        <position position="341"/>
    </location>
</feature>
<feature type="sequence conflict" description="In Ref. 1; BAE33041/BAE41663." evidence="6" ref="1">
    <original>T</original>
    <variation>R</variation>
    <location>
        <position position="390"/>
    </location>
</feature>
<feature type="sequence conflict" description="In Ref. 1; BAC25797." evidence="6" ref="1">
    <original>K</original>
    <variation>E</variation>
    <location>
        <position position="521"/>
    </location>
</feature>
<feature type="sequence conflict" description="In Ref. 1; BAE33041/BAE41663." evidence="6" ref="1">
    <original>I</original>
    <variation>N</variation>
    <location>
        <position position="600"/>
    </location>
</feature>
<proteinExistence type="evidence at protein level"/>
<gene>
    <name type="primary">Ppp1r21</name>
    <name type="synonym">Ccdc128</name>
    <name type="synonym">Klraq1</name>
</gene>
<organism>
    <name type="scientific">Mus musculus</name>
    <name type="common">Mouse</name>
    <dbReference type="NCBI Taxonomy" id="10090"/>
    <lineage>
        <taxon>Eukaryota</taxon>
        <taxon>Metazoa</taxon>
        <taxon>Chordata</taxon>
        <taxon>Craniata</taxon>
        <taxon>Vertebrata</taxon>
        <taxon>Euteleostomi</taxon>
        <taxon>Mammalia</taxon>
        <taxon>Eutheria</taxon>
        <taxon>Euarchontoglires</taxon>
        <taxon>Glires</taxon>
        <taxon>Rodentia</taxon>
        <taxon>Myomorpha</taxon>
        <taxon>Muroidea</taxon>
        <taxon>Muridae</taxon>
        <taxon>Murinae</taxon>
        <taxon>Mus</taxon>
        <taxon>Mus</taxon>
    </lineage>
</organism>
<accession>Q3TDD9</accession>
<accession>B2RPZ6</accession>
<accession>Q3KQN7</accession>
<accession>Q3U2U9</accession>
<accession>Q8BHS9</accession>
<accession>Q9D1A1</accession>
<sequence length="780" mass="88338">MASAELQGKYQKLAQEYSKLRAQNQVLKKGVVDEQASSAALKEQLKMKDQSLRKLQQEMDSLTFRNLQLAKRVELLQDELALSEPRGKKNKKSGESSSQLSQEQKSVFDEDLQKKIEENERLHIQFFEADEHHRHVEAELRSRLATLETEAAQHQAVIDGLTRKYMETIEKLQSDKAKLEVKSQTLEKEAKECRLRTEECQLQLKNLHEDLSGRLEESLSIINEKVPFNDTKCHLYNALNVPLHNRRHQLKMRDIAGQALAFVQDLVPALLNFHTYTEQRIQIFPVDSAIDTISPLNQKFSQYLHENASYVRPLEEGMLHLFESITEDTVTVLETTVKLKMFSDHLTSYVRFLRKILPYQLKSLEEECESSLCTPALRARNLELSQDMKTMTAVFEKLQTYVTLLALPSTEPDGLLRTNYTSVLTNVGAALHGFHDVMKDISKHYSQKASIEHEIPTATQKLVTTNDCILSSAVTLTNGAGKIASFFGNNVDYFIASLSYGPKTASGFISPLSAECMLQYKKKAAAYMKSLRTPLAESVPYGEAVANRRVLLSSTESREGLAQQVQQSLEKISKLEQEKEHWMLEAQLAKIKLEKENQRIADRLRGTTSAQLPGLAQENATVPIASSQEEAAAKVLTEPVQSTSLVGMLTRTPDSEAPDVESREDLIKSHYMARIAELTSQLQLADSKSVHFYAECRALSKRLALAEKSKETLTEEMRLASQNISRLQDELMTTKRSYEDQLSMMSDHLCSMNETLSKQREEIDTLKMASKGNSKKTRNR</sequence>
<evidence type="ECO:0000250" key="1">
    <source>
        <dbReference type="UniProtKB" id="Q6ZMI0"/>
    </source>
</evidence>
<evidence type="ECO:0000255" key="2"/>
<evidence type="ECO:0000256" key="3">
    <source>
        <dbReference type="SAM" id="MobiDB-lite"/>
    </source>
</evidence>
<evidence type="ECO:0000269" key="4">
    <source>
    </source>
</evidence>
<evidence type="ECO:0000303" key="5">
    <source>
    </source>
</evidence>
<evidence type="ECO:0000305" key="6"/>
<evidence type="ECO:0007744" key="7">
    <source>
    </source>
</evidence>
<dbReference type="EMBL" id="AK003781">
    <property type="protein sequence ID" value="BAB22992.1"/>
    <property type="molecule type" value="mRNA"/>
</dbReference>
<dbReference type="EMBL" id="AK028185">
    <property type="protein sequence ID" value="BAC25797.1"/>
    <property type="molecule type" value="mRNA"/>
</dbReference>
<dbReference type="EMBL" id="AK155094">
    <property type="protein sequence ID" value="BAE33041.1"/>
    <property type="molecule type" value="mRNA"/>
</dbReference>
<dbReference type="EMBL" id="AK170254">
    <property type="protein sequence ID" value="BAE41663.1"/>
    <property type="molecule type" value="mRNA"/>
</dbReference>
<dbReference type="EMBL" id="BC106118">
    <property type="protein sequence ID" value="AAI06119.1"/>
    <property type="status" value="ALT_SEQ"/>
    <property type="molecule type" value="mRNA"/>
</dbReference>
<dbReference type="EMBL" id="BC137673">
    <property type="protein sequence ID" value="AAI37674.1"/>
    <property type="molecule type" value="mRNA"/>
</dbReference>
<dbReference type="CCDS" id="CCDS29023.1">
    <molecule id="Q3TDD9-1"/>
</dbReference>
<dbReference type="RefSeq" id="NP_082934.3">
    <molecule id="Q3TDD9-1"/>
    <property type="nucleotide sequence ID" value="NM_028658.4"/>
</dbReference>
<dbReference type="SMR" id="Q3TDD9"/>
<dbReference type="BioGRID" id="216285">
    <property type="interactions" value="4"/>
</dbReference>
<dbReference type="FunCoup" id="Q3TDD9">
    <property type="interactions" value="2641"/>
</dbReference>
<dbReference type="STRING" id="10090.ENSMUSP00000048443"/>
<dbReference type="GlyGen" id="Q3TDD9">
    <property type="glycosylation" value="1 site, 1 N-linked glycan (1 site)"/>
</dbReference>
<dbReference type="iPTMnet" id="Q3TDD9"/>
<dbReference type="PhosphoSitePlus" id="Q3TDD9"/>
<dbReference type="SwissPalm" id="Q3TDD9"/>
<dbReference type="jPOST" id="Q3TDD9"/>
<dbReference type="PaxDb" id="10090-ENSMUSP00000048443"/>
<dbReference type="PeptideAtlas" id="Q3TDD9"/>
<dbReference type="ProteomicsDB" id="291788">
    <molecule id="Q3TDD9-1"/>
</dbReference>
<dbReference type="ProteomicsDB" id="291789">
    <molecule id="Q3TDD9-2"/>
</dbReference>
<dbReference type="Pumba" id="Q3TDD9"/>
<dbReference type="Antibodypedia" id="47409">
    <property type="antibodies" value="97 antibodies from 17 providers"/>
</dbReference>
<dbReference type="DNASU" id="73825"/>
<dbReference type="Ensembl" id="ENSMUST00000038551.8">
    <molecule id="Q3TDD9-1"/>
    <property type="protein sequence ID" value="ENSMUSP00000048443.7"/>
    <property type="gene ID" value="ENSMUSG00000034709.9"/>
</dbReference>
<dbReference type="GeneID" id="73825"/>
<dbReference type="KEGG" id="mmu:73825"/>
<dbReference type="UCSC" id="uc008dvo.2">
    <molecule id="Q3TDD9-1"/>
    <property type="organism name" value="mouse"/>
</dbReference>
<dbReference type="UCSC" id="uc008dvp.2">
    <molecule id="Q3TDD9-2"/>
    <property type="organism name" value="mouse"/>
</dbReference>
<dbReference type="AGR" id="MGI:1921075"/>
<dbReference type="CTD" id="129285"/>
<dbReference type="MGI" id="MGI:1921075">
    <property type="gene designation" value="Ppp1r21"/>
</dbReference>
<dbReference type="VEuPathDB" id="HostDB:ENSMUSG00000034709"/>
<dbReference type="eggNOG" id="KOG4421">
    <property type="taxonomic scope" value="Eukaryota"/>
</dbReference>
<dbReference type="GeneTree" id="ENSGT00390000006820"/>
<dbReference type="HOGENOM" id="CLU_022372_0_0_1"/>
<dbReference type="InParanoid" id="Q3TDD9"/>
<dbReference type="OMA" id="XFSQYLH"/>
<dbReference type="OrthoDB" id="5566667at2759"/>
<dbReference type="PhylomeDB" id="Q3TDD9"/>
<dbReference type="TreeFam" id="TF320535"/>
<dbReference type="BioGRID-ORCS" id="73825">
    <property type="hits" value="3 hits in 79 CRISPR screens"/>
</dbReference>
<dbReference type="CD-CODE" id="CE726F99">
    <property type="entry name" value="Postsynaptic density"/>
</dbReference>
<dbReference type="ChiTaRS" id="Ppp1r21">
    <property type="organism name" value="mouse"/>
</dbReference>
<dbReference type="PRO" id="PR:Q3TDD9"/>
<dbReference type="Proteomes" id="UP000000589">
    <property type="component" value="Chromosome 17"/>
</dbReference>
<dbReference type="RNAct" id="Q3TDD9">
    <property type="molecule type" value="protein"/>
</dbReference>
<dbReference type="Bgee" id="ENSMUSG00000034709">
    <property type="expression patterns" value="Expressed in CA3 field of hippocampus and 261 other cell types or tissues"/>
</dbReference>
<dbReference type="GO" id="GO:0005769">
    <property type="term" value="C:early endosome"/>
    <property type="evidence" value="ECO:0000250"/>
    <property type="project" value="UniProtKB"/>
</dbReference>
<dbReference type="GO" id="GO:0003723">
    <property type="term" value="F:RNA binding"/>
    <property type="evidence" value="ECO:0007669"/>
    <property type="project" value="UniProtKB-KW"/>
</dbReference>
<dbReference type="InterPro" id="IPR040024">
    <property type="entry name" value="PPP1R21"/>
</dbReference>
<dbReference type="InterPro" id="IPR049372">
    <property type="entry name" value="PPP1R21_C"/>
</dbReference>
<dbReference type="InterPro" id="IPR019343">
    <property type="entry name" value="PPP1R21_N"/>
</dbReference>
<dbReference type="InterPro" id="IPR019348">
    <property type="entry name" value="PPP1R21_six_helix"/>
</dbReference>
<dbReference type="PANTHER" id="PTHR21448:SF0">
    <property type="entry name" value="PROTEIN PHOSPHATASE 1 REGULATORY SUBUNIT 21"/>
    <property type="match status" value="1"/>
</dbReference>
<dbReference type="PANTHER" id="PTHR21448">
    <property type="entry name" value="SMOOTH MUSCLE MYOSIN HEAVY CHAIN-RELATED"/>
    <property type="match status" value="1"/>
</dbReference>
<dbReference type="Pfam" id="PF10205">
    <property type="entry name" value="KLRAQ"/>
    <property type="match status" value="1"/>
</dbReference>
<dbReference type="Pfam" id="PF21636">
    <property type="entry name" value="PPP1R21_C"/>
    <property type="match status" value="1"/>
</dbReference>
<dbReference type="Pfam" id="PF10212">
    <property type="entry name" value="PPP1R21_helical"/>
    <property type="match status" value="1"/>
</dbReference>
<dbReference type="SMART" id="SM01254">
    <property type="entry name" value="KLRAQ"/>
    <property type="match status" value="1"/>
</dbReference>
<keyword id="KW-0025">Alternative splicing</keyword>
<keyword id="KW-0175">Coiled coil</keyword>
<keyword id="KW-0967">Endosome</keyword>
<keyword id="KW-0597">Phosphoprotein</keyword>
<keyword id="KW-1185">Reference proteome</keyword>
<keyword id="KW-0694">RNA-binding</keyword>
<protein>
    <recommendedName>
        <fullName>Protein phosphatase 1 regulatory subunit 21</fullName>
    </recommendedName>
    <alternativeName>
        <fullName>Coiled-coil domain-containing protein 128</fullName>
    </alternativeName>
    <alternativeName>
        <fullName evidence="1">Ferry endosomal RAB5 effector complex subunit 2</fullName>
        <shortName evidence="1">Fy-2</shortName>
    </alternativeName>
    <alternativeName>
        <fullName>KLRAQ motif-containing protein 1</fullName>
    </alternativeName>
</protein>
<reference key="1">
    <citation type="journal article" date="2005" name="Science">
        <title>The transcriptional landscape of the mammalian genome.</title>
        <authorList>
            <person name="Carninci P."/>
            <person name="Kasukawa T."/>
            <person name="Katayama S."/>
            <person name="Gough J."/>
            <person name="Frith M.C."/>
            <person name="Maeda N."/>
            <person name="Oyama R."/>
            <person name="Ravasi T."/>
            <person name="Lenhard B."/>
            <person name="Wells C."/>
            <person name="Kodzius R."/>
            <person name="Shimokawa K."/>
            <person name="Bajic V.B."/>
            <person name="Brenner S.E."/>
            <person name="Batalov S."/>
            <person name="Forrest A.R."/>
            <person name="Zavolan M."/>
            <person name="Davis M.J."/>
            <person name="Wilming L.G."/>
            <person name="Aidinis V."/>
            <person name="Allen J.E."/>
            <person name="Ambesi-Impiombato A."/>
            <person name="Apweiler R."/>
            <person name="Aturaliya R.N."/>
            <person name="Bailey T.L."/>
            <person name="Bansal M."/>
            <person name="Baxter L."/>
            <person name="Beisel K.W."/>
            <person name="Bersano T."/>
            <person name="Bono H."/>
            <person name="Chalk A.M."/>
            <person name="Chiu K.P."/>
            <person name="Choudhary V."/>
            <person name="Christoffels A."/>
            <person name="Clutterbuck D.R."/>
            <person name="Crowe M.L."/>
            <person name="Dalla E."/>
            <person name="Dalrymple B.P."/>
            <person name="de Bono B."/>
            <person name="Della Gatta G."/>
            <person name="di Bernardo D."/>
            <person name="Down T."/>
            <person name="Engstrom P."/>
            <person name="Fagiolini M."/>
            <person name="Faulkner G."/>
            <person name="Fletcher C.F."/>
            <person name="Fukushima T."/>
            <person name="Furuno M."/>
            <person name="Futaki S."/>
            <person name="Gariboldi M."/>
            <person name="Georgii-Hemming P."/>
            <person name="Gingeras T.R."/>
            <person name="Gojobori T."/>
            <person name="Green R.E."/>
            <person name="Gustincich S."/>
            <person name="Harbers M."/>
            <person name="Hayashi Y."/>
            <person name="Hensch T.K."/>
            <person name="Hirokawa N."/>
            <person name="Hill D."/>
            <person name="Huminiecki L."/>
            <person name="Iacono M."/>
            <person name="Ikeo K."/>
            <person name="Iwama A."/>
            <person name="Ishikawa T."/>
            <person name="Jakt M."/>
            <person name="Kanapin A."/>
            <person name="Katoh M."/>
            <person name="Kawasawa Y."/>
            <person name="Kelso J."/>
            <person name="Kitamura H."/>
            <person name="Kitano H."/>
            <person name="Kollias G."/>
            <person name="Krishnan S.P."/>
            <person name="Kruger A."/>
            <person name="Kummerfeld S.K."/>
            <person name="Kurochkin I.V."/>
            <person name="Lareau L.F."/>
            <person name="Lazarevic D."/>
            <person name="Lipovich L."/>
            <person name="Liu J."/>
            <person name="Liuni S."/>
            <person name="McWilliam S."/>
            <person name="Madan Babu M."/>
            <person name="Madera M."/>
            <person name="Marchionni L."/>
            <person name="Matsuda H."/>
            <person name="Matsuzawa S."/>
            <person name="Miki H."/>
            <person name="Mignone F."/>
            <person name="Miyake S."/>
            <person name="Morris K."/>
            <person name="Mottagui-Tabar S."/>
            <person name="Mulder N."/>
            <person name="Nakano N."/>
            <person name="Nakauchi H."/>
            <person name="Ng P."/>
            <person name="Nilsson R."/>
            <person name="Nishiguchi S."/>
            <person name="Nishikawa S."/>
            <person name="Nori F."/>
            <person name="Ohara O."/>
            <person name="Okazaki Y."/>
            <person name="Orlando V."/>
            <person name="Pang K.C."/>
            <person name="Pavan W.J."/>
            <person name="Pavesi G."/>
            <person name="Pesole G."/>
            <person name="Petrovsky N."/>
            <person name="Piazza S."/>
            <person name="Reed J."/>
            <person name="Reid J.F."/>
            <person name="Ring B.Z."/>
            <person name="Ringwald M."/>
            <person name="Rost B."/>
            <person name="Ruan Y."/>
            <person name="Salzberg S.L."/>
            <person name="Sandelin A."/>
            <person name="Schneider C."/>
            <person name="Schoenbach C."/>
            <person name="Sekiguchi K."/>
            <person name="Semple C.A."/>
            <person name="Seno S."/>
            <person name="Sessa L."/>
            <person name="Sheng Y."/>
            <person name="Shibata Y."/>
            <person name="Shimada H."/>
            <person name="Shimada K."/>
            <person name="Silva D."/>
            <person name="Sinclair B."/>
            <person name="Sperling S."/>
            <person name="Stupka E."/>
            <person name="Sugiura K."/>
            <person name="Sultana R."/>
            <person name="Takenaka Y."/>
            <person name="Taki K."/>
            <person name="Tammoja K."/>
            <person name="Tan S.L."/>
            <person name="Tang S."/>
            <person name="Taylor M.S."/>
            <person name="Tegner J."/>
            <person name="Teichmann S.A."/>
            <person name="Ueda H.R."/>
            <person name="van Nimwegen E."/>
            <person name="Verardo R."/>
            <person name="Wei C.L."/>
            <person name="Yagi K."/>
            <person name="Yamanishi H."/>
            <person name="Zabarovsky E."/>
            <person name="Zhu S."/>
            <person name="Zimmer A."/>
            <person name="Hide W."/>
            <person name="Bult C."/>
            <person name="Grimmond S.M."/>
            <person name="Teasdale R.D."/>
            <person name="Liu E.T."/>
            <person name="Brusic V."/>
            <person name="Quackenbush J."/>
            <person name="Wahlestedt C."/>
            <person name="Mattick J.S."/>
            <person name="Hume D.A."/>
            <person name="Kai C."/>
            <person name="Sasaki D."/>
            <person name="Tomaru Y."/>
            <person name="Fukuda S."/>
            <person name="Kanamori-Katayama M."/>
            <person name="Suzuki M."/>
            <person name="Aoki J."/>
            <person name="Arakawa T."/>
            <person name="Iida J."/>
            <person name="Imamura K."/>
            <person name="Itoh M."/>
            <person name="Kato T."/>
            <person name="Kawaji H."/>
            <person name="Kawagashira N."/>
            <person name="Kawashima T."/>
            <person name="Kojima M."/>
            <person name="Kondo S."/>
            <person name="Konno H."/>
            <person name="Nakano K."/>
            <person name="Ninomiya N."/>
            <person name="Nishio T."/>
            <person name="Okada M."/>
            <person name="Plessy C."/>
            <person name="Shibata K."/>
            <person name="Shiraki T."/>
            <person name="Suzuki S."/>
            <person name="Tagami M."/>
            <person name="Waki K."/>
            <person name="Watahiki A."/>
            <person name="Okamura-Oho Y."/>
            <person name="Suzuki H."/>
            <person name="Kawai J."/>
            <person name="Hayashizaki Y."/>
        </authorList>
    </citation>
    <scope>NUCLEOTIDE SEQUENCE [LARGE SCALE MRNA] (ISOFORMS 1 AND 2)</scope>
    <source>
        <strain>C57BL/6J</strain>
        <strain>NOD</strain>
    </source>
</reference>
<reference key="2">
    <citation type="journal article" date="2004" name="Genome Res.">
        <title>The status, quality, and expansion of the NIH full-length cDNA project: the Mammalian Gene Collection (MGC).</title>
        <authorList>
            <consortium name="The MGC Project Team"/>
        </authorList>
    </citation>
    <scope>NUCLEOTIDE SEQUENCE [LARGE SCALE MRNA] (ISOFORM 1)</scope>
    <source>
        <tissue>Brain</tissue>
    </source>
</reference>
<reference key="3">
    <citation type="journal article" date="2010" name="Cell">
        <title>A tissue-specific atlas of mouse protein phosphorylation and expression.</title>
        <authorList>
            <person name="Huttlin E.L."/>
            <person name="Jedrychowski M.P."/>
            <person name="Elias J.E."/>
            <person name="Goswami T."/>
            <person name="Rad R."/>
            <person name="Beausoleil S.A."/>
            <person name="Villen J."/>
            <person name="Haas W."/>
            <person name="Sowa M.E."/>
            <person name="Gygi S.P."/>
        </authorList>
    </citation>
    <scope>PHOSPHORYLATION [LARGE SCALE ANALYSIS] AT THR-652</scope>
    <scope>IDENTIFICATION BY MASS SPECTROMETRY [LARGE SCALE ANALYSIS]</scope>
    <source>
        <tissue>Brain</tissue>
        <tissue>Brown adipose tissue</tissue>
        <tissue>Kidney</tissue>
        <tissue>Liver</tissue>
        <tissue>Lung</tissue>
        <tissue>Pancreas</tissue>
        <tissue>Spleen</tissue>
        <tissue>Testis</tissue>
    </source>
</reference>
<reference key="4">
    <citation type="journal article" date="2019" name="Hum. Mutat.">
        <title>Biallelic loss of function variants in PPP1R21 cause a neurodevelopmental syndrome with impaired endocytic function.</title>
        <authorList>
            <person name="Rehman A.U."/>
            <person name="Najafi M."/>
            <person name="Kambouris M."/>
            <person name="Al-Gazali L."/>
            <person name="Makrythanasis P."/>
            <person name="Rad A."/>
            <person name="Maroofian R."/>
            <person name="Rajab A."/>
            <person name="Stark Z."/>
            <person name="Hunter J.V."/>
            <person name="Bakey Z."/>
            <person name="Tokita M.J."/>
            <person name="He W."/>
            <person name="Vetrini F."/>
            <person name="Petersen A."/>
            <person name="Santoni F.A."/>
            <person name="Hamamy H."/>
            <person name="Wu K."/>
            <person name="Al-Jasmi F."/>
            <person name="Helmstaedter M."/>
            <person name="Arnold S.J."/>
            <person name="Xia F."/>
            <person name="Richmond C."/>
            <person name="Liu P."/>
            <person name="Karimiani E.G."/>
            <person name="Karami Madani G."/>
            <person name="Lunke S."/>
            <person name="El-Shanti H."/>
            <person name="Eng C.M."/>
            <person name="Antonarakis S.E."/>
            <person name="Hertecant J."/>
            <person name="Walkiewicz M."/>
            <person name="Yang Y."/>
            <person name="Schmidts M."/>
        </authorList>
    </citation>
    <scope>TISSUE SPECIFICITY</scope>
</reference>
<comment type="function">
    <text evidence="1">Component of the FERRY complex (Five-subunit Endosomal Rab5 and RNA/ribosome intermediary). The FERRY complex directly interacts with mRNAs and RAB5A, and functions as a RAB5A effector involved in the localization and the distribution of specific mRNAs most likely by mediating their endosomal transport. The complex recruits mRNAs and ribosomes to early endosomes through direct mRNA-interaction. In the complex, PPP1R21 serves as a binding hub connecting all five complex subunits and mediating the binding to mRNA and early endosomes via RAB5A (By similarity). Putative regulator of protein phosphatase 1 (PP1) activity. May play a role in the endosomal sorting process or in endosome maturation pathway (By similarity).</text>
</comment>
<comment type="subunit">
    <text evidence="1">Component of the FERRY complex, composed of five subunits: TBCK, PPP1R21, FERRY3, CRYZL1 and GATAD1, with a ratio of 1:2:1:2:4 respectively. PPP1R21 serves as a binding hub connecting all five complex subunits to mediate the binding to specific mitochondrial mRNAs. Interacts with the GTP-bound form of RAB5A (via its C-terminal region); linking the mRNP complex onto trafficking endosomes for active mRNA transport (By similarity). Interacts with PPP1CA (By similarity).</text>
</comment>
<comment type="subcellular location">
    <subcellularLocation>
        <location evidence="1">Early endosome</location>
    </subcellularLocation>
</comment>
<comment type="alternative products">
    <event type="alternative splicing"/>
    <isoform>
        <id>Q3TDD9-1</id>
        <name>1</name>
        <sequence type="displayed"/>
    </isoform>
    <isoform>
        <id>Q3TDD9-2</id>
        <name>2</name>
        <sequence type="described" ref="VSP_024988 VSP_024990"/>
    </isoform>
</comment>
<comment type="tissue specificity">
    <text evidence="4">Expressed at 16 dpc in the cortex (at protein level).</text>
</comment>
<comment type="domain">
    <text evidence="1">Coiled-coil domains of PPP1R21 are essential for RNA binding.</text>
</comment>
<comment type="miscellaneous">
    <molecule>Isoform 2</molecule>
    <text evidence="6">May be due to intron retention.</text>
</comment>
<comment type="sequence caution" evidence="6">
    <conflict type="miscellaneous discrepancy">
        <sequence resource="EMBL-CDS" id="AAI06119"/>
    </conflict>
    <text>Aberrant splicing.</text>
</comment>